<name>ATPE_VESOH</name>
<reference key="1">
    <citation type="journal article" date="2007" name="Curr. Biol.">
        <title>Reduced genome of the thioautotrophic intracellular symbiont in a deep-sea clam, Calyptogena okutanii.</title>
        <authorList>
            <person name="Kuwahara H."/>
            <person name="Yoshida T."/>
            <person name="Takaki Y."/>
            <person name="Shimamura S."/>
            <person name="Nishi S."/>
            <person name="Harada M."/>
            <person name="Matsuyama K."/>
            <person name="Takishita K."/>
            <person name="Kawato M."/>
            <person name="Uematsu K."/>
            <person name="Fujiwara Y."/>
            <person name="Sato T."/>
            <person name="Kato C."/>
            <person name="Kitagawa M."/>
            <person name="Kato I."/>
            <person name="Maruyama T."/>
        </authorList>
    </citation>
    <scope>NUCLEOTIDE SEQUENCE [LARGE SCALE GENOMIC DNA]</scope>
    <source>
        <strain>HA</strain>
    </source>
</reference>
<dbReference type="EMBL" id="AP009247">
    <property type="protein sequence ID" value="BAF62043.1"/>
    <property type="molecule type" value="Genomic_DNA"/>
</dbReference>
<dbReference type="RefSeq" id="WP_011930312.1">
    <property type="nucleotide sequence ID" value="NC_009465.1"/>
</dbReference>
<dbReference type="SMR" id="A5CVI5"/>
<dbReference type="STRING" id="412965.COSY_0944"/>
<dbReference type="KEGG" id="vok:COSY_0944"/>
<dbReference type="eggNOG" id="COG0355">
    <property type="taxonomic scope" value="Bacteria"/>
</dbReference>
<dbReference type="HOGENOM" id="CLU_084338_2_0_6"/>
<dbReference type="OrthoDB" id="9791445at2"/>
<dbReference type="Proteomes" id="UP000000247">
    <property type="component" value="Chromosome"/>
</dbReference>
<dbReference type="GO" id="GO:0005886">
    <property type="term" value="C:plasma membrane"/>
    <property type="evidence" value="ECO:0007669"/>
    <property type="project" value="UniProtKB-SubCell"/>
</dbReference>
<dbReference type="GO" id="GO:0045259">
    <property type="term" value="C:proton-transporting ATP synthase complex"/>
    <property type="evidence" value="ECO:0007669"/>
    <property type="project" value="UniProtKB-KW"/>
</dbReference>
<dbReference type="GO" id="GO:0005524">
    <property type="term" value="F:ATP binding"/>
    <property type="evidence" value="ECO:0007669"/>
    <property type="project" value="UniProtKB-UniRule"/>
</dbReference>
<dbReference type="GO" id="GO:0046933">
    <property type="term" value="F:proton-transporting ATP synthase activity, rotational mechanism"/>
    <property type="evidence" value="ECO:0007669"/>
    <property type="project" value="UniProtKB-UniRule"/>
</dbReference>
<dbReference type="CDD" id="cd12152">
    <property type="entry name" value="F1-ATPase_delta"/>
    <property type="match status" value="1"/>
</dbReference>
<dbReference type="FunFam" id="2.60.15.10:FF:000001">
    <property type="entry name" value="ATP synthase epsilon chain"/>
    <property type="match status" value="1"/>
</dbReference>
<dbReference type="Gene3D" id="1.20.5.440">
    <property type="entry name" value="ATP synthase delta/epsilon subunit, C-terminal domain"/>
    <property type="match status" value="1"/>
</dbReference>
<dbReference type="Gene3D" id="2.60.15.10">
    <property type="entry name" value="F0F1 ATP synthase delta/epsilon subunit, N-terminal"/>
    <property type="match status" value="1"/>
</dbReference>
<dbReference type="HAMAP" id="MF_00530">
    <property type="entry name" value="ATP_synth_epsil_bac"/>
    <property type="match status" value="1"/>
</dbReference>
<dbReference type="InterPro" id="IPR036794">
    <property type="entry name" value="ATP_F1_dsu/esu_C_sf"/>
</dbReference>
<dbReference type="InterPro" id="IPR001469">
    <property type="entry name" value="ATP_synth_F1_dsu/esu"/>
</dbReference>
<dbReference type="InterPro" id="IPR020546">
    <property type="entry name" value="ATP_synth_F1_dsu/esu_N"/>
</dbReference>
<dbReference type="InterPro" id="IPR020547">
    <property type="entry name" value="ATP_synth_F1_esu_C"/>
</dbReference>
<dbReference type="InterPro" id="IPR036771">
    <property type="entry name" value="ATPsynth_dsu/esu_N"/>
</dbReference>
<dbReference type="NCBIfam" id="TIGR01216">
    <property type="entry name" value="ATP_synt_epsi"/>
    <property type="match status" value="1"/>
</dbReference>
<dbReference type="NCBIfam" id="NF001847">
    <property type="entry name" value="PRK00571.1-4"/>
    <property type="match status" value="1"/>
</dbReference>
<dbReference type="PANTHER" id="PTHR13822">
    <property type="entry name" value="ATP SYNTHASE DELTA/EPSILON CHAIN"/>
    <property type="match status" value="1"/>
</dbReference>
<dbReference type="PANTHER" id="PTHR13822:SF10">
    <property type="entry name" value="ATP SYNTHASE EPSILON CHAIN, CHLOROPLASTIC"/>
    <property type="match status" value="1"/>
</dbReference>
<dbReference type="Pfam" id="PF00401">
    <property type="entry name" value="ATP-synt_DE"/>
    <property type="match status" value="1"/>
</dbReference>
<dbReference type="Pfam" id="PF02823">
    <property type="entry name" value="ATP-synt_DE_N"/>
    <property type="match status" value="1"/>
</dbReference>
<dbReference type="SUPFAM" id="SSF46604">
    <property type="entry name" value="Epsilon subunit of F1F0-ATP synthase C-terminal domain"/>
    <property type="match status" value="1"/>
</dbReference>
<dbReference type="SUPFAM" id="SSF51344">
    <property type="entry name" value="Epsilon subunit of F1F0-ATP synthase N-terminal domain"/>
    <property type="match status" value="1"/>
</dbReference>
<gene>
    <name evidence="1" type="primary">atpC</name>
    <name type="ordered locus">COSY_0944</name>
</gene>
<keyword id="KW-0066">ATP synthesis</keyword>
<keyword id="KW-0997">Cell inner membrane</keyword>
<keyword id="KW-1003">Cell membrane</keyword>
<keyword id="KW-0139">CF(1)</keyword>
<keyword id="KW-0375">Hydrogen ion transport</keyword>
<keyword id="KW-0406">Ion transport</keyword>
<keyword id="KW-0472">Membrane</keyword>
<keyword id="KW-1185">Reference proteome</keyword>
<keyword id="KW-0813">Transport</keyword>
<protein>
    <recommendedName>
        <fullName evidence="1">ATP synthase epsilon chain</fullName>
    </recommendedName>
    <alternativeName>
        <fullName evidence="1">ATP synthase F1 sector epsilon subunit</fullName>
    </alternativeName>
    <alternativeName>
        <fullName evidence="1">F-ATPase epsilon subunit</fullName>
    </alternativeName>
</protein>
<accession>A5CVI5</accession>
<comment type="function">
    <text evidence="1">Produces ATP from ADP in the presence of a proton gradient across the membrane.</text>
</comment>
<comment type="subunit">
    <text evidence="1">F-type ATPases have 2 components, CF(1) - the catalytic core - and CF(0) - the membrane proton channel. CF(1) has five subunits: alpha(3), beta(3), gamma(1), delta(1), epsilon(1). CF(0) has three main subunits: a, b and c.</text>
</comment>
<comment type="subcellular location">
    <subcellularLocation>
        <location evidence="1">Cell inner membrane</location>
        <topology evidence="1">Peripheral membrane protein</topology>
    </subcellularLocation>
</comment>
<comment type="similarity">
    <text evidence="1">Belongs to the ATPase epsilon chain family.</text>
</comment>
<proteinExistence type="inferred from homology"/>
<evidence type="ECO:0000255" key="1">
    <source>
        <dbReference type="HAMAP-Rule" id="MF_00530"/>
    </source>
</evidence>
<feature type="chain" id="PRO_1000056550" description="ATP synthase epsilon chain">
    <location>
        <begin position="1"/>
        <end position="138"/>
    </location>
</feature>
<sequence>MSTIHVDVVSATESLYSGEVLCVFAPASTGELGIYPKHTALLSILKPGEVRIETDKGIESIYVSGGIVEVQPDVVTIFSDTAIRANDLDEFKVLEAKQRAQDEMDNSIDTQDISATQAALSESMAQLQMINKMRGKKC</sequence>
<organism>
    <name type="scientific">Vesicomyosocius okutanii subsp. Calyptogena okutanii (strain HA)</name>
    <dbReference type="NCBI Taxonomy" id="412965"/>
    <lineage>
        <taxon>Bacteria</taxon>
        <taxon>Pseudomonadati</taxon>
        <taxon>Pseudomonadota</taxon>
        <taxon>Gammaproteobacteria</taxon>
        <taxon>Candidatus Pseudothioglobaceae</taxon>
        <taxon>Candidatus Vesicomyosocius</taxon>
    </lineage>
</organism>